<gene>
    <name evidence="1" type="primary">rapZ</name>
    <name type="ordered locus">KPN78578_35840</name>
    <name type="ORF">KPN_03615</name>
</gene>
<accession>A6TEM4</accession>
<evidence type="ECO:0000255" key="1">
    <source>
        <dbReference type="HAMAP-Rule" id="MF_00636"/>
    </source>
</evidence>
<comment type="function">
    <text evidence="1">Modulates the synthesis of GlmS, by affecting the processing and stability of the regulatory small RNA GlmZ. When glucosamine-6-phosphate (GlcN6P) concentrations are high in the cell, RapZ binds GlmZ and targets it to cleavage by RNase E. Consequently, GlmZ is inactivated and unable to activate GlmS synthesis. Under low GlcN6P concentrations, RapZ is sequestered and inactivated by an other regulatory small RNA, GlmY, preventing GlmZ degradation and leading to synthesis of GlmS.</text>
</comment>
<comment type="subunit">
    <text evidence="1">Homotrimer.</text>
</comment>
<comment type="similarity">
    <text evidence="1">Belongs to the RapZ-like family. RapZ subfamily.</text>
</comment>
<dbReference type="EMBL" id="CP000647">
    <property type="protein sequence ID" value="ABR79008.1"/>
    <property type="molecule type" value="Genomic_DNA"/>
</dbReference>
<dbReference type="RefSeq" id="WP_002918428.1">
    <property type="nucleotide sequence ID" value="NC_009648.1"/>
</dbReference>
<dbReference type="SMR" id="A6TEM4"/>
<dbReference type="STRING" id="272620.KPN_03615"/>
<dbReference type="jPOST" id="A6TEM4"/>
<dbReference type="PaxDb" id="272620-KPN_03615"/>
<dbReference type="EnsemblBacteria" id="ABR79008">
    <property type="protein sequence ID" value="ABR79008"/>
    <property type="gene ID" value="KPN_03615"/>
</dbReference>
<dbReference type="GeneID" id="93271078"/>
<dbReference type="KEGG" id="kpn:KPN_03615"/>
<dbReference type="HOGENOM" id="CLU_059558_1_1_6"/>
<dbReference type="Proteomes" id="UP000000265">
    <property type="component" value="Chromosome"/>
</dbReference>
<dbReference type="GO" id="GO:0005524">
    <property type="term" value="F:ATP binding"/>
    <property type="evidence" value="ECO:0007669"/>
    <property type="project" value="UniProtKB-UniRule"/>
</dbReference>
<dbReference type="GO" id="GO:0005525">
    <property type="term" value="F:GTP binding"/>
    <property type="evidence" value="ECO:0007669"/>
    <property type="project" value="UniProtKB-UniRule"/>
</dbReference>
<dbReference type="GO" id="GO:0003723">
    <property type="term" value="F:RNA binding"/>
    <property type="evidence" value="ECO:0007669"/>
    <property type="project" value="UniProtKB-KW"/>
</dbReference>
<dbReference type="Gene3D" id="3.40.50.300">
    <property type="entry name" value="P-loop containing nucleotide triphosphate hydrolases"/>
    <property type="match status" value="1"/>
</dbReference>
<dbReference type="HAMAP" id="MF_00636">
    <property type="entry name" value="RapZ_like"/>
    <property type="match status" value="1"/>
</dbReference>
<dbReference type="InterPro" id="IPR027417">
    <property type="entry name" value="P-loop_NTPase"/>
</dbReference>
<dbReference type="InterPro" id="IPR005337">
    <property type="entry name" value="RapZ-like"/>
</dbReference>
<dbReference type="InterPro" id="IPR053930">
    <property type="entry name" value="RapZ-like_N"/>
</dbReference>
<dbReference type="InterPro" id="IPR053931">
    <property type="entry name" value="RapZ_C"/>
</dbReference>
<dbReference type="NCBIfam" id="NF003828">
    <property type="entry name" value="PRK05416.1"/>
    <property type="match status" value="1"/>
</dbReference>
<dbReference type="PANTHER" id="PTHR30448">
    <property type="entry name" value="RNASE ADAPTER PROTEIN RAPZ"/>
    <property type="match status" value="1"/>
</dbReference>
<dbReference type="PANTHER" id="PTHR30448:SF0">
    <property type="entry name" value="RNASE ADAPTER PROTEIN RAPZ"/>
    <property type="match status" value="1"/>
</dbReference>
<dbReference type="Pfam" id="PF22740">
    <property type="entry name" value="PapZ_C"/>
    <property type="match status" value="1"/>
</dbReference>
<dbReference type="Pfam" id="PF03668">
    <property type="entry name" value="RapZ-like_N"/>
    <property type="match status" value="1"/>
</dbReference>
<dbReference type="PIRSF" id="PIRSF005052">
    <property type="entry name" value="P-loopkin"/>
    <property type="match status" value="1"/>
</dbReference>
<dbReference type="SUPFAM" id="SSF52540">
    <property type="entry name" value="P-loop containing nucleoside triphosphate hydrolases"/>
    <property type="match status" value="1"/>
</dbReference>
<feature type="chain" id="PRO_1000061437" description="RNase adapter protein RapZ">
    <location>
        <begin position="1"/>
        <end position="284"/>
    </location>
</feature>
<feature type="region of interest" description="RNA-binding" evidence="1">
    <location>
        <begin position="266"/>
        <end position="284"/>
    </location>
</feature>
<feature type="binding site" evidence="1">
    <location>
        <begin position="8"/>
        <end position="15"/>
    </location>
    <ligand>
        <name>ATP</name>
        <dbReference type="ChEBI" id="CHEBI:30616"/>
    </ligand>
</feature>
<feature type="binding site" evidence="1">
    <location>
        <begin position="56"/>
        <end position="59"/>
    </location>
    <ligand>
        <name>GTP</name>
        <dbReference type="ChEBI" id="CHEBI:37565"/>
    </ligand>
</feature>
<organism>
    <name type="scientific">Klebsiella pneumoniae subsp. pneumoniae (strain ATCC 700721 / MGH 78578)</name>
    <dbReference type="NCBI Taxonomy" id="272620"/>
    <lineage>
        <taxon>Bacteria</taxon>
        <taxon>Pseudomonadati</taxon>
        <taxon>Pseudomonadota</taxon>
        <taxon>Gammaproteobacteria</taxon>
        <taxon>Enterobacterales</taxon>
        <taxon>Enterobacteriaceae</taxon>
        <taxon>Klebsiella/Raoultella group</taxon>
        <taxon>Klebsiella</taxon>
        <taxon>Klebsiella pneumoniae complex</taxon>
    </lineage>
</organism>
<keyword id="KW-0067">ATP-binding</keyword>
<keyword id="KW-0342">GTP-binding</keyword>
<keyword id="KW-0547">Nucleotide-binding</keyword>
<keyword id="KW-0694">RNA-binding</keyword>
<protein>
    <recommendedName>
        <fullName evidence="1">RNase adapter protein RapZ</fullName>
    </recommendedName>
</protein>
<reference key="1">
    <citation type="submission" date="2006-09" db="EMBL/GenBank/DDBJ databases">
        <authorList>
            <consortium name="The Klebsiella pneumonia Genome Sequencing Project"/>
            <person name="McClelland M."/>
            <person name="Sanderson E.K."/>
            <person name="Spieth J."/>
            <person name="Clifton W.S."/>
            <person name="Latreille P."/>
            <person name="Sabo A."/>
            <person name="Pepin K."/>
            <person name="Bhonagiri V."/>
            <person name="Porwollik S."/>
            <person name="Ali J."/>
            <person name="Wilson R.K."/>
        </authorList>
    </citation>
    <scope>NUCLEOTIDE SEQUENCE [LARGE SCALE GENOMIC DNA]</scope>
    <source>
        <strain>ATCC 700721 / MGH 78578</strain>
    </source>
</reference>
<sequence>MVLMIVSGRSGSGKSVALRALEDMGFYCVDNLPVVLLPDLARSLADRNISAAVSIDVRNMPESPEIFEQAMQNLPECFSPQLLFLDADRNTLIRRYSDTRRLHPLSSKNLSLESAIDEESDLLEPLRSRADLIVDTSEMSVHELAEMLRTRLLGKRERELTMVFESFGFKHGIPIDADYVFDVRFLPNPHWDPKLRPMTGLDKPVAAFLDRHTEVHNFIYQTRSYLELWLPMLETNNRSYLTVAIGCTGGKHRSVYIAEQLADYFRSRGKNVQSRHRTLEKRKS</sequence>
<name>RAPZ_KLEP7</name>
<proteinExistence type="inferred from homology"/>